<name>ARND_SALDC</name>
<comment type="function">
    <text evidence="1">Catalyzes the deformylation of 4-deoxy-4-formamido-L-arabinose-phosphoundecaprenol to 4-amino-4-deoxy-L-arabinose-phosphoundecaprenol. The modified arabinose is attached to lipid A and is required for resistance to polymyxin and cationic antimicrobial peptides.</text>
</comment>
<comment type="catalytic activity">
    <reaction evidence="1">
        <text>4-deoxy-4-formamido-alpha-L-arabinopyranosyl di-trans,octa-cis-undecaprenyl phosphate + H2O = 4-amino-4-deoxy-alpha-L-arabinopyranosyl di-trans,octa-cis-undecaprenyl phosphate + formate</text>
        <dbReference type="Rhea" id="RHEA:27734"/>
        <dbReference type="ChEBI" id="CHEBI:15377"/>
        <dbReference type="ChEBI" id="CHEBI:15740"/>
        <dbReference type="ChEBI" id="CHEBI:58909"/>
        <dbReference type="ChEBI" id="CHEBI:60463"/>
        <dbReference type="EC" id="3.5.1.n3"/>
    </reaction>
</comment>
<comment type="pathway">
    <text evidence="1">Glycolipid biosynthesis; 4-amino-4-deoxy-alpha-L-arabinose undecaprenyl phosphate biosynthesis; 4-amino-4-deoxy-alpha-L-arabinose undecaprenyl phosphate from UDP-4-deoxy-4-formamido-beta-L-arabinose and undecaprenyl phosphate: step 2/2.</text>
</comment>
<comment type="pathway">
    <text evidence="1">Bacterial outer membrane biogenesis; lipopolysaccharide biosynthesis.</text>
</comment>
<comment type="similarity">
    <text evidence="1">Belongs to the polysaccharide deacetylase family. ArnD deformylase subfamily.</text>
</comment>
<feature type="chain" id="PRO_0000383529" description="Probable 4-deoxy-4-formamido-L-arabinose-phosphoundecaprenol deformylase ArnD">
    <location>
        <begin position="1"/>
        <end position="299"/>
    </location>
</feature>
<feature type="domain" description="NodB homology" evidence="1">
    <location>
        <begin position="2"/>
        <end position="260"/>
    </location>
</feature>
<keyword id="KW-0046">Antibiotic resistance</keyword>
<keyword id="KW-0378">Hydrolase</keyword>
<keyword id="KW-0441">Lipid A biosynthesis</keyword>
<keyword id="KW-0444">Lipid biosynthesis</keyword>
<keyword id="KW-0443">Lipid metabolism</keyword>
<keyword id="KW-0448">Lipopolysaccharide biosynthesis</keyword>
<accession>B5FNU0</accession>
<organism>
    <name type="scientific">Salmonella dublin (strain CT_02021853)</name>
    <dbReference type="NCBI Taxonomy" id="439851"/>
    <lineage>
        <taxon>Bacteria</taxon>
        <taxon>Pseudomonadati</taxon>
        <taxon>Pseudomonadota</taxon>
        <taxon>Gammaproteobacteria</taxon>
        <taxon>Enterobacterales</taxon>
        <taxon>Enterobacteriaceae</taxon>
        <taxon>Salmonella</taxon>
    </lineage>
</organism>
<protein>
    <recommendedName>
        <fullName evidence="1">Probable 4-deoxy-4-formamido-L-arabinose-phosphoundecaprenol deformylase ArnD</fullName>
        <ecNumber evidence="1">3.5.1.n3</ecNumber>
    </recommendedName>
</protein>
<proteinExistence type="inferred from homology"/>
<sequence length="299" mass="33078">MTKVGLRIDVDTLRGTREGVPRLLATLHRHGVQASFFFSVGPDNMGRHLWRLIRPRFLWKMLRSNAASLYGWDILLAGTAWPGKNIGNANAGIIRETATYHETGLHAWDHHAWQTHSGHWSIRQLEEDIARGITALEAIIGKPVTCSAAAGWRADGRVVRAKEPFNLRYNSDCRGTTLFRPLLMPGQTGTPQIPVTLPTWDEVIGPAVQAQSFNTWIISRMLQDKGTPVYTIHAEVEGIVHQPLFEDLLVRARDAGITFCPLGELLPTSPESLPLGQIVRGHIPGREGWLGCQQAASAS</sequence>
<gene>
    <name evidence="1" type="primary">arnD</name>
    <name type="ordered locus">SeD_A2644</name>
</gene>
<evidence type="ECO:0000255" key="1">
    <source>
        <dbReference type="HAMAP-Rule" id="MF_01870"/>
    </source>
</evidence>
<dbReference type="EC" id="3.5.1.n3" evidence="1"/>
<dbReference type="EMBL" id="CP001144">
    <property type="protein sequence ID" value="ACH74784.1"/>
    <property type="molecule type" value="Genomic_DNA"/>
</dbReference>
<dbReference type="RefSeq" id="WP_000169766.1">
    <property type="nucleotide sequence ID" value="NC_011205.1"/>
</dbReference>
<dbReference type="SMR" id="B5FNU0"/>
<dbReference type="KEGG" id="sed:SeD_A2644"/>
<dbReference type="HOGENOM" id="CLU_084199_0_0_6"/>
<dbReference type="UniPathway" id="UPA00030"/>
<dbReference type="UniPathway" id="UPA00036">
    <property type="reaction ID" value="UER00496"/>
</dbReference>
<dbReference type="Proteomes" id="UP000008322">
    <property type="component" value="Chromosome"/>
</dbReference>
<dbReference type="GO" id="GO:0016020">
    <property type="term" value="C:membrane"/>
    <property type="evidence" value="ECO:0007669"/>
    <property type="project" value="GOC"/>
</dbReference>
<dbReference type="GO" id="GO:0016811">
    <property type="term" value="F:hydrolase activity, acting on carbon-nitrogen (but not peptide) bonds, in linear amides"/>
    <property type="evidence" value="ECO:0007669"/>
    <property type="project" value="UniProtKB-UniRule"/>
</dbReference>
<dbReference type="GO" id="GO:0036108">
    <property type="term" value="P:4-amino-4-deoxy-alpha-L-arabinopyranosyl undecaprenyl phosphate biosynthetic process"/>
    <property type="evidence" value="ECO:0007669"/>
    <property type="project" value="UniProtKB-UniRule"/>
</dbReference>
<dbReference type="GO" id="GO:0009245">
    <property type="term" value="P:lipid A biosynthetic process"/>
    <property type="evidence" value="ECO:0007669"/>
    <property type="project" value="UniProtKB-UniRule"/>
</dbReference>
<dbReference type="GO" id="GO:0009103">
    <property type="term" value="P:lipopolysaccharide biosynthetic process"/>
    <property type="evidence" value="ECO:0007669"/>
    <property type="project" value="UniProtKB-UniRule"/>
</dbReference>
<dbReference type="GO" id="GO:0046677">
    <property type="term" value="P:response to antibiotic"/>
    <property type="evidence" value="ECO:0007669"/>
    <property type="project" value="UniProtKB-KW"/>
</dbReference>
<dbReference type="Gene3D" id="3.20.20.370">
    <property type="entry name" value="Glycoside hydrolase/deacetylase"/>
    <property type="match status" value="1"/>
</dbReference>
<dbReference type="HAMAP" id="MF_01870">
    <property type="entry name" value="ArnD"/>
    <property type="match status" value="1"/>
</dbReference>
<dbReference type="InterPro" id="IPR023557">
    <property type="entry name" value="ArnD"/>
</dbReference>
<dbReference type="InterPro" id="IPR011330">
    <property type="entry name" value="Glyco_hydro/deAcase_b/a-brl"/>
</dbReference>
<dbReference type="InterPro" id="IPR002509">
    <property type="entry name" value="NODB_dom"/>
</dbReference>
<dbReference type="InterPro" id="IPR050248">
    <property type="entry name" value="Polysacc_deacetylase_ArnD"/>
</dbReference>
<dbReference type="NCBIfam" id="NF011923">
    <property type="entry name" value="PRK15394.1"/>
    <property type="match status" value="1"/>
</dbReference>
<dbReference type="PANTHER" id="PTHR10587:SF137">
    <property type="entry name" value="4-DEOXY-4-FORMAMIDO-L-ARABINOSE-PHOSPHOUNDECAPRENOL DEFORMYLASE ARND-RELATED"/>
    <property type="match status" value="1"/>
</dbReference>
<dbReference type="PANTHER" id="PTHR10587">
    <property type="entry name" value="GLYCOSYL TRANSFERASE-RELATED"/>
    <property type="match status" value="1"/>
</dbReference>
<dbReference type="Pfam" id="PF01522">
    <property type="entry name" value="Polysacc_deac_1"/>
    <property type="match status" value="1"/>
</dbReference>
<dbReference type="SUPFAM" id="SSF88713">
    <property type="entry name" value="Glycoside hydrolase/deacetylase"/>
    <property type="match status" value="1"/>
</dbReference>
<dbReference type="PROSITE" id="PS51677">
    <property type="entry name" value="NODB"/>
    <property type="match status" value="1"/>
</dbReference>
<reference key="1">
    <citation type="journal article" date="2011" name="J. Bacteriol.">
        <title>Comparative genomics of 28 Salmonella enterica isolates: evidence for CRISPR-mediated adaptive sublineage evolution.</title>
        <authorList>
            <person name="Fricke W.F."/>
            <person name="Mammel M.K."/>
            <person name="McDermott P.F."/>
            <person name="Tartera C."/>
            <person name="White D.G."/>
            <person name="Leclerc J.E."/>
            <person name="Ravel J."/>
            <person name="Cebula T.A."/>
        </authorList>
    </citation>
    <scope>NUCLEOTIDE SEQUENCE [LARGE SCALE GENOMIC DNA]</scope>
    <source>
        <strain>CT_02021853</strain>
    </source>
</reference>